<comment type="similarity">
    <text evidence="1">Belongs to the UPF0325 family.</text>
</comment>
<reference key="1">
    <citation type="submission" date="2006-09" db="EMBL/GenBank/DDBJ databases">
        <authorList>
            <consortium name="The Klebsiella pneumonia Genome Sequencing Project"/>
            <person name="McClelland M."/>
            <person name="Sanderson E.K."/>
            <person name="Spieth J."/>
            <person name="Clifton W.S."/>
            <person name="Latreille P."/>
            <person name="Sabo A."/>
            <person name="Pepin K."/>
            <person name="Bhonagiri V."/>
            <person name="Porwollik S."/>
            <person name="Ali J."/>
            <person name="Wilson R.K."/>
        </authorList>
    </citation>
    <scope>NUCLEOTIDE SEQUENCE [LARGE SCALE GENOMIC DNA]</scope>
    <source>
        <strain>ATCC 700721 / MGH 78578</strain>
    </source>
</reference>
<dbReference type="EMBL" id="CP000647">
    <property type="protein sequence ID" value="ABR75638.1"/>
    <property type="molecule type" value="Genomic_DNA"/>
</dbReference>
<dbReference type="RefSeq" id="WP_002889292.1">
    <property type="nucleotide sequence ID" value="NC_009648.1"/>
</dbReference>
<dbReference type="SMR" id="A6T4W7"/>
<dbReference type="STRING" id="272620.KPN_00178"/>
<dbReference type="jPOST" id="A6T4W7"/>
<dbReference type="PaxDb" id="272620-KPN_00178"/>
<dbReference type="EnsemblBacteria" id="ABR75638">
    <property type="protein sequence ID" value="ABR75638"/>
    <property type="gene ID" value="KPN_00178"/>
</dbReference>
<dbReference type="KEGG" id="kpn:KPN_00178"/>
<dbReference type="HOGENOM" id="CLU_136774_0_0_6"/>
<dbReference type="Proteomes" id="UP000000265">
    <property type="component" value="Chromosome"/>
</dbReference>
<dbReference type="HAMAP" id="MF_01519">
    <property type="entry name" value="UPF0325"/>
    <property type="match status" value="1"/>
</dbReference>
<dbReference type="InterPro" id="IPR020911">
    <property type="entry name" value="UPF0325"/>
</dbReference>
<dbReference type="NCBIfam" id="NF010213">
    <property type="entry name" value="PRK13677.1"/>
    <property type="match status" value="1"/>
</dbReference>
<dbReference type="Pfam" id="PF11944">
    <property type="entry name" value="DUF3461"/>
    <property type="match status" value="1"/>
</dbReference>
<proteinExistence type="inferred from homology"/>
<sequence length="128" mass="15096">MYDNLKSLGITNPDEIDRYSLRQEANNDILKIYFQKDKGEFFAKSVKFKYPRQRKTVVADGVGQGYKEVQEISPNLRYVIDELDQICQRDRTEIDLKRKILDDLRHLESVVTNKISEIEADLEKLTRK</sequence>
<organism>
    <name type="scientific">Klebsiella pneumoniae subsp. pneumoniae (strain ATCC 700721 / MGH 78578)</name>
    <dbReference type="NCBI Taxonomy" id="272620"/>
    <lineage>
        <taxon>Bacteria</taxon>
        <taxon>Pseudomonadati</taxon>
        <taxon>Pseudomonadota</taxon>
        <taxon>Gammaproteobacteria</taxon>
        <taxon>Enterobacterales</taxon>
        <taxon>Enterobacteriaceae</taxon>
        <taxon>Klebsiella/Raoultella group</taxon>
        <taxon>Klebsiella</taxon>
        <taxon>Klebsiella pneumoniae complex</taxon>
    </lineage>
</organism>
<name>Y177_KLEP7</name>
<protein>
    <recommendedName>
        <fullName evidence="1">UPF0325 protein KPN78578_01770</fullName>
    </recommendedName>
</protein>
<gene>
    <name type="ordered locus">KPN78578_01770</name>
    <name type="ORF">KPN_00178</name>
</gene>
<accession>A6T4W7</accession>
<evidence type="ECO:0000255" key="1">
    <source>
        <dbReference type="HAMAP-Rule" id="MF_01519"/>
    </source>
</evidence>
<feature type="chain" id="PRO_0000315548" description="UPF0325 protein KPN78578_01770">
    <location>
        <begin position="1"/>
        <end position="128"/>
    </location>
</feature>